<evidence type="ECO:0000255" key="1">
    <source>
        <dbReference type="HAMAP-Rule" id="MF_01626"/>
    </source>
</evidence>
<gene>
    <name evidence="1" type="primary">viaA</name>
    <name type="ordered locus">EcSMS35_4113</name>
</gene>
<protein>
    <recommendedName>
        <fullName evidence="1">Regulatory protein ViaA</fullName>
    </recommendedName>
    <alternativeName>
        <fullName evidence="1">VWA interacting with AAA+ ATPase</fullName>
    </alternativeName>
</protein>
<reference key="1">
    <citation type="journal article" date="2008" name="J. Bacteriol.">
        <title>Insights into the environmental resistance gene pool from the genome sequence of the multidrug-resistant environmental isolate Escherichia coli SMS-3-5.</title>
        <authorList>
            <person name="Fricke W.F."/>
            <person name="Wright M.S."/>
            <person name="Lindell A.H."/>
            <person name="Harkins D.M."/>
            <person name="Baker-Austin C."/>
            <person name="Ravel J."/>
            <person name="Stepanauskas R."/>
        </authorList>
    </citation>
    <scope>NUCLEOTIDE SEQUENCE [LARGE SCALE GENOMIC DNA]</scope>
    <source>
        <strain>SMS-3-5 / SECEC</strain>
    </source>
</reference>
<comment type="function">
    <text evidence="1">Component of the RavA-ViaA chaperone complex, which may act on the membrane to optimize the function of some of the respiratory chains. ViaA stimulates the ATPase activity of RavA.</text>
</comment>
<comment type="subunit">
    <text evidence="1">Homodimer. Interacts with RavA.</text>
</comment>
<comment type="subcellular location">
    <subcellularLocation>
        <location evidence="1">Cytoplasm</location>
    </subcellularLocation>
</comment>
<comment type="similarity">
    <text evidence="1">Belongs to the ViaA family.</text>
</comment>
<organism>
    <name type="scientific">Escherichia coli (strain SMS-3-5 / SECEC)</name>
    <dbReference type="NCBI Taxonomy" id="439855"/>
    <lineage>
        <taxon>Bacteria</taxon>
        <taxon>Pseudomonadati</taxon>
        <taxon>Pseudomonadota</taxon>
        <taxon>Gammaproteobacteria</taxon>
        <taxon>Enterobacterales</taxon>
        <taxon>Enterobacteriaceae</taxon>
        <taxon>Escherichia</taxon>
    </lineage>
</organism>
<name>VIAA_ECOSM</name>
<dbReference type="EMBL" id="CP000970">
    <property type="protein sequence ID" value="ACB19869.1"/>
    <property type="molecule type" value="Genomic_DNA"/>
</dbReference>
<dbReference type="RefSeq" id="WP_000956652.1">
    <property type="nucleotide sequence ID" value="NC_010498.1"/>
</dbReference>
<dbReference type="SMR" id="B1LL72"/>
<dbReference type="KEGG" id="ecm:EcSMS35_4113"/>
<dbReference type="HOGENOM" id="CLU_022130_0_0_6"/>
<dbReference type="Proteomes" id="UP000007011">
    <property type="component" value="Chromosome"/>
</dbReference>
<dbReference type="GO" id="GO:0005829">
    <property type="term" value="C:cytosol"/>
    <property type="evidence" value="ECO:0007669"/>
    <property type="project" value="TreeGrafter"/>
</dbReference>
<dbReference type="CDD" id="cd01462">
    <property type="entry name" value="VWA_YIEM_type"/>
    <property type="match status" value="1"/>
</dbReference>
<dbReference type="Gene3D" id="3.40.50.410">
    <property type="entry name" value="von Willebrand factor, type A domain"/>
    <property type="match status" value="1"/>
</dbReference>
<dbReference type="HAMAP" id="MF_01626">
    <property type="entry name" value="ViaA"/>
    <property type="match status" value="1"/>
</dbReference>
<dbReference type="InterPro" id="IPR008912">
    <property type="entry name" value="Uncharacterised_CoxE"/>
</dbReference>
<dbReference type="InterPro" id="IPR023481">
    <property type="entry name" value="Uncharacterised_ViaA"/>
</dbReference>
<dbReference type="InterPro" id="IPR002035">
    <property type="entry name" value="VWF_A"/>
</dbReference>
<dbReference type="InterPro" id="IPR036465">
    <property type="entry name" value="vWFA_dom_sf"/>
</dbReference>
<dbReference type="NCBIfam" id="NF008230">
    <property type="entry name" value="PRK10997.1"/>
    <property type="match status" value="1"/>
</dbReference>
<dbReference type="PANTHER" id="PTHR36846">
    <property type="entry name" value="PROTEIN VIAA"/>
    <property type="match status" value="1"/>
</dbReference>
<dbReference type="PANTHER" id="PTHR36846:SF1">
    <property type="entry name" value="PROTEIN VIAA"/>
    <property type="match status" value="1"/>
</dbReference>
<dbReference type="Pfam" id="PF05762">
    <property type="entry name" value="VWA_CoxE"/>
    <property type="match status" value="1"/>
</dbReference>
<dbReference type="SMART" id="SM00327">
    <property type="entry name" value="VWA"/>
    <property type="match status" value="1"/>
</dbReference>
<dbReference type="SUPFAM" id="SSF53300">
    <property type="entry name" value="vWA-like"/>
    <property type="match status" value="1"/>
</dbReference>
<accession>B1LL72</accession>
<keyword id="KW-0143">Chaperone</keyword>
<keyword id="KW-0963">Cytoplasm</keyword>
<sequence length="483" mass="55932">MLTLDTLNVMLAVSEEGLIEEMIIALLASPQLAVFFEKFPRLKAAITDDVPRWREALRSRLKDARVPPELTEEVMCYQQSQLLSTPQFIVQLPQILDLLHRLNSPWAEQARQLVDANSTITSALHTLFLQRWRLSLIVQATTLNQQLLEEEREQLLSEVQERMTQSGQLEPILADNNTAAGRLWDMSAGQLKRGDYQLIVKYGEFLNEQPELKRLAEQLGRSREAKSIPRNDAQMETFRTLVREPATVPEQVDGLQQSDDILRLLPPELATLGITELEYEFYRRLVEKQLLTYRLHGESWREKVIERPVVHKDYDEQPRGPFIVCVDTSGSMGGFNEQCAKAFCLALMRIALAENRRCYIMLFSTEIVRYELSGPQGIEQAIRFLSQRFRGGTDLASCFRAIMERLQSREWFDADAVVISDFIAQRLPDDVTSKVKELQRVHQHRFHAVAMSAHGKPGIMRIFDHIWRFDTGMRSRLLRRWRR</sequence>
<feature type="chain" id="PRO_1000186150" description="Regulatory protein ViaA">
    <location>
        <begin position="1"/>
        <end position="483"/>
    </location>
</feature>
<proteinExistence type="inferred from homology"/>